<comment type="function">
    <text evidence="1 3">Component of the Mediator complex, a coactivator involved in the regulated transcription of nearly all RNA polymerase II-dependent genes. Mediator functions as a bridge to convey information from gene-specific regulatory proteins to the basal RNA polymerase II transcription machinery. Mediator is recruited to promoters by direct interactions with regulatory proteins and serves as a scaffold for the assembly of a functional preinitiation complex with RNA polymerase II and the general transcription factors (By similarity). Required for activated transcription of the MtnA, MtnB and MtnD genes.</text>
</comment>
<comment type="subunit">
    <text evidence="1 2">Component of the Mediator complex (By similarity). Interacts with MED4 and MED21.</text>
</comment>
<comment type="subcellular location">
    <subcellularLocation>
        <location evidence="4">Nucleus</location>
    </subcellularLocation>
</comment>
<comment type="similarity">
    <text evidence="4">Belongs to the Mediator complex subunit 10 family.</text>
</comment>
<reference key="1">
    <citation type="submission" date="2000-07" db="EMBL/GenBank/DDBJ databases">
        <title>Transcriptional coactivators in Drosophila.</title>
        <authorList>
            <person name="Tzeng D.L."/>
            <person name="Southworth J.W."/>
            <person name="Kennison J.A."/>
        </authorList>
    </citation>
    <scope>NUCLEOTIDE SEQUENCE [MRNA]</scope>
    <source>
        <strain>Canton-S</strain>
    </source>
</reference>
<reference key="2">
    <citation type="journal article" date="2000" name="Science">
        <title>The genome sequence of Drosophila melanogaster.</title>
        <authorList>
            <person name="Adams M.D."/>
            <person name="Celniker S.E."/>
            <person name="Holt R.A."/>
            <person name="Evans C.A."/>
            <person name="Gocayne J.D."/>
            <person name="Amanatides P.G."/>
            <person name="Scherer S.E."/>
            <person name="Li P.W."/>
            <person name="Hoskins R.A."/>
            <person name="Galle R.F."/>
            <person name="George R.A."/>
            <person name="Lewis S.E."/>
            <person name="Richards S."/>
            <person name="Ashburner M."/>
            <person name="Henderson S.N."/>
            <person name="Sutton G.G."/>
            <person name="Wortman J.R."/>
            <person name="Yandell M.D."/>
            <person name="Zhang Q."/>
            <person name="Chen L.X."/>
            <person name="Brandon R.C."/>
            <person name="Rogers Y.-H.C."/>
            <person name="Blazej R.G."/>
            <person name="Champe M."/>
            <person name="Pfeiffer B.D."/>
            <person name="Wan K.H."/>
            <person name="Doyle C."/>
            <person name="Baxter E.G."/>
            <person name="Helt G."/>
            <person name="Nelson C.R."/>
            <person name="Miklos G.L.G."/>
            <person name="Abril J.F."/>
            <person name="Agbayani A."/>
            <person name="An H.-J."/>
            <person name="Andrews-Pfannkoch C."/>
            <person name="Baldwin D."/>
            <person name="Ballew R.M."/>
            <person name="Basu A."/>
            <person name="Baxendale J."/>
            <person name="Bayraktaroglu L."/>
            <person name="Beasley E.M."/>
            <person name="Beeson K.Y."/>
            <person name="Benos P.V."/>
            <person name="Berman B.P."/>
            <person name="Bhandari D."/>
            <person name="Bolshakov S."/>
            <person name="Borkova D."/>
            <person name="Botchan M.R."/>
            <person name="Bouck J."/>
            <person name="Brokstein P."/>
            <person name="Brottier P."/>
            <person name="Burtis K.C."/>
            <person name="Busam D.A."/>
            <person name="Butler H."/>
            <person name="Cadieu E."/>
            <person name="Center A."/>
            <person name="Chandra I."/>
            <person name="Cherry J.M."/>
            <person name="Cawley S."/>
            <person name="Dahlke C."/>
            <person name="Davenport L.B."/>
            <person name="Davies P."/>
            <person name="de Pablos B."/>
            <person name="Delcher A."/>
            <person name="Deng Z."/>
            <person name="Mays A.D."/>
            <person name="Dew I."/>
            <person name="Dietz S.M."/>
            <person name="Dodson K."/>
            <person name="Doup L.E."/>
            <person name="Downes M."/>
            <person name="Dugan-Rocha S."/>
            <person name="Dunkov B.C."/>
            <person name="Dunn P."/>
            <person name="Durbin K.J."/>
            <person name="Evangelista C.C."/>
            <person name="Ferraz C."/>
            <person name="Ferriera S."/>
            <person name="Fleischmann W."/>
            <person name="Fosler C."/>
            <person name="Gabrielian A.E."/>
            <person name="Garg N.S."/>
            <person name="Gelbart W.M."/>
            <person name="Glasser K."/>
            <person name="Glodek A."/>
            <person name="Gong F."/>
            <person name="Gorrell J.H."/>
            <person name="Gu Z."/>
            <person name="Guan P."/>
            <person name="Harris M."/>
            <person name="Harris N.L."/>
            <person name="Harvey D.A."/>
            <person name="Heiman T.J."/>
            <person name="Hernandez J.R."/>
            <person name="Houck J."/>
            <person name="Hostin D."/>
            <person name="Houston K.A."/>
            <person name="Howland T.J."/>
            <person name="Wei M.-H."/>
            <person name="Ibegwam C."/>
            <person name="Jalali M."/>
            <person name="Kalush F."/>
            <person name="Karpen G.H."/>
            <person name="Ke Z."/>
            <person name="Kennison J.A."/>
            <person name="Ketchum K.A."/>
            <person name="Kimmel B.E."/>
            <person name="Kodira C.D."/>
            <person name="Kraft C.L."/>
            <person name="Kravitz S."/>
            <person name="Kulp D."/>
            <person name="Lai Z."/>
            <person name="Lasko P."/>
            <person name="Lei Y."/>
            <person name="Levitsky A.A."/>
            <person name="Li J.H."/>
            <person name="Li Z."/>
            <person name="Liang Y."/>
            <person name="Lin X."/>
            <person name="Liu X."/>
            <person name="Mattei B."/>
            <person name="McIntosh T.C."/>
            <person name="McLeod M.P."/>
            <person name="McPherson D."/>
            <person name="Merkulov G."/>
            <person name="Milshina N.V."/>
            <person name="Mobarry C."/>
            <person name="Morris J."/>
            <person name="Moshrefi A."/>
            <person name="Mount S.M."/>
            <person name="Moy M."/>
            <person name="Murphy B."/>
            <person name="Murphy L."/>
            <person name="Muzny D.M."/>
            <person name="Nelson D.L."/>
            <person name="Nelson D.R."/>
            <person name="Nelson K.A."/>
            <person name="Nixon K."/>
            <person name="Nusskern D.R."/>
            <person name="Pacleb J.M."/>
            <person name="Palazzolo M."/>
            <person name="Pittman G.S."/>
            <person name="Pan S."/>
            <person name="Pollard J."/>
            <person name="Puri V."/>
            <person name="Reese M.G."/>
            <person name="Reinert K."/>
            <person name="Remington K."/>
            <person name="Saunders R.D.C."/>
            <person name="Scheeler F."/>
            <person name="Shen H."/>
            <person name="Shue B.C."/>
            <person name="Siden-Kiamos I."/>
            <person name="Simpson M."/>
            <person name="Skupski M.P."/>
            <person name="Smith T.J."/>
            <person name="Spier E."/>
            <person name="Spradling A.C."/>
            <person name="Stapleton M."/>
            <person name="Strong R."/>
            <person name="Sun E."/>
            <person name="Svirskas R."/>
            <person name="Tector C."/>
            <person name="Turner R."/>
            <person name="Venter E."/>
            <person name="Wang A.H."/>
            <person name="Wang X."/>
            <person name="Wang Z.-Y."/>
            <person name="Wassarman D.A."/>
            <person name="Weinstock G.M."/>
            <person name="Weissenbach J."/>
            <person name="Williams S.M."/>
            <person name="Woodage T."/>
            <person name="Worley K.C."/>
            <person name="Wu D."/>
            <person name="Yang S."/>
            <person name="Yao Q.A."/>
            <person name="Ye J."/>
            <person name="Yeh R.-F."/>
            <person name="Zaveri J.S."/>
            <person name="Zhan M."/>
            <person name="Zhang G."/>
            <person name="Zhao Q."/>
            <person name="Zheng L."/>
            <person name="Zheng X.H."/>
            <person name="Zhong F.N."/>
            <person name="Zhong W."/>
            <person name="Zhou X."/>
            <person name="Zhu S.C."/>
            <person name="Zhu X."/>
            <person name="Smith H.O."/>
            <person name="Gibbs R.A."/>
            <person name="Myers E.W."/>
            <person name="Rubin G.M."/>
            <person name="Venter J.C."/>
        </authorList>
    </citation>
    <scope>NUCLEOTIDE SEQUENCE [LARGE SCALE GENOMIC DNA]</scope>
    <source>
        <strain>Berkeley</strain>
    </source>
</reference>
<reference key="3">
    <citation type="journal article" date="2002" name="Genome Biol.">
        <title>Annotation of the Drosophila melanogaster euchromatic genome: a systematic review.</title>
        <authorList>
            <person name="Misra S."/>
            <person name="Crosby M.A."/>
            <person name="Mungall C.J."/>
            <person name="Matthews B.B."/>
            <person name="Campbell K.S."/>
            <person name="Hradecky P."/>
            <person name="Huang Y."/>
            <person name="Kaminker J.S."/>
            <person name="Millburn G.H."/>
            <person name="Prochnik S.E."/>
            <person name="Smith C.D."/>
            <person name="Tupy J.L."/>
            <person name="Whitfield E.J."/>
            <person name="Bayraktaroglu L."/>
            <person name="Berman B.P."/>
            <person name="Bettencourt B.R."/>
            <person name="Celniker S.E."/>
            <person name="de Grey A.D.N.J."/>
            <person name="Drysdale R.A."/>
            <person name="Harris N.L."/>
            <person name="Richter J."/>
            <person name="Russo S."/>
            <person name="Schroeder A.J."/>
            <person name="Shu S.Q."/>
            <person name="Stapleton M."/>
            <person name="Yamada C."/>
            <person name="Ashburner M."/>
            <person name="Gelbart W.M."/>
            <person name="Rubin G.M."/>
            <person name="Lewis S.E."/>
        </authorList>
    </citation>
    <scope>GENOME REANNOTATION</scope>
    <source>
        <strain>Berkeley</strain>
    </source>
</reference>
<reference key="4">
    <citation type="journal article" date="2002" name="Genome Biol.">
        <title>A Drosophila full-length cDNA resource.</title>
        <authorList>
            <person name="Stapleton M."/>
            <person name="Carlson J.W."/>
            <person name="Brokstein P."/>
            <person name="Yu C."/>
            <person name="Champe M."/>
            <person name="George R.A."/>
            <person name="Guarin H."/>
            <person name="Kronmiller B."/>
            <person name="Pacleb J.M."/>
            <person name="Park S."/>
            <person name="Wan K.H."/>
            <person name="Rubin G.M."/>
            <person name="Celniker S.E."/>
        </authorList>
    </citation>
    <scope>NUCLEOTIDE SEQUENCE [LARGE SCALE MRNA]</scope>
    <source>
        <strain>Berkeley</strain>
        <tissue>Embryo</tissue>
    </source>
</reference>
<reference key="5">
    <citation type="journal article" date="2004" name="Nucleic Acids Res.">
        <title>A high resolution protein interaction map of the yeast Mediator complex.</title>
        <authorList>
            <person name="Guglielmi B."/>
            <person name="van Berkum N.L."/>
            <person name="Klapholz B."/>
            <person name="Bijma T."/>
            <person name="Boube M."/>
            <person name="Boschiero C."/>
            <person name="Bourbon H.-M."/>
            <person name="Holstege F.C.P."/>
            <person name="Werner M."/>
        </authorList>
    </citation>
    <scope>INTERACTION WITH MED4 AND MED21</scope>
</reference>
<reference key="6">
    <citation type="journal article" date="2006" name="Genes Dev.">
        <title>Coactivator cross-talk specifies transcriptional output.</title>
        <authorList>
            <person name="Marr M.T. II"/>
            <person name="Isogai Y."/>
            <person name="Wright K.J."/>
            <person name="Tjian R."/>
        </authorList>
    </citation>
    <scope>FUNCTION</scope>
</reference>
<name>MED10_DROME</name>
<keyword id="KW-0010">Activator</keyword>
<keyword id="KW-0539">Nucleus</keyword>
<keyword id="KW-1185">Reference proteome</keyword>
<keyword id="KW-0804">Transcription</keyword>
<keyword id="KW-0805">Transcription regulation</keyword>
<gene>
    <name type="primary">MED10</name>
    <name type="synonym">Nut2</name>
    <name type="ORF">CG5057</name>
</gene>
<organism>
    <name type="scientific">Drosophila melanogaster</name>
    <name type="common">Fruit fly</name>
    <dbReference type="NCBI Taxonomy" id="7227"/>
    <lineage>
        <taxon>Eukaryota</taxon>
        <taxon>Metazoa</taxon>
        <taxon>Ecdysozoa</taxon>
        <taxon>Arthropoda</taxon>
        <taxon>Hexapoda</taxon>
        <taxon>Insecta</taxon>
        <taxon>Pterygota</taxon>
        <taxon>Neoptera</taxon>
        <taxon>Endopterygota</taxon>
        <taxon>Diptera</taxon>
        <taxon>Brachycera</taxon>
        <taxon>Muscomorpha</taxon>
        <taxon>Ephydroidea</taxon>
        <taxon>Drosophilidae</taxon>
        <taxon>Drosophila</taxon>
        <taxon>Sophophora</taxon>
    </lineage>
</organism>
<dbReference type="EMBL" id="AY005465">
    <property type="protein sequence ID" value="AAF97815.1"/>
    <property type="molecule type" value="mRNA"/>
</dbReference>
<dbReference type="EMBL" id="AE014296">
    <property type="protein sequence ID" value="AAF49523.3"/>
    <property type="molecule type" value="Genomic_DNA"/>
</dbReference>
<dbReference type="EMBL" id="AY118450">
    <property type="protein sequence ID" value="AAM48479.1"/>
    <property type="molecule type" value="mRNA"/>
</dbReference>
<dbReference type="RefSeq" id="NP_001261931.1">
    <property type="nucleotide sequence ID" value="NM_001275002.1"/>
</dbReference>
<dbReference type="RefSeq" id="NP_648849.3">
    <property type="nucleotide sequence ID" value="NM_140592.4"/>
</dbReference>
<dbReference type="SMR" id="Q9GYU7"/>
<dbReference type="BioGRID" id="65085">
    <property type="interactions" value="44"/>
</dbReference>
<dbReference type="ComplexPortal" id="CPX-2308">
    <property type="entry name" value="Core mediator complex"/>
</dbReference>
<dbReference type="FunCoup" id="Q9GYU7">
    <property type="interactions" value="1247"/>
</dbReference>
<dbReference type="IntAct" id="Q9GYU7">
    <property type="interactions" value="58"/>
</dbReference>
<dbReference type="STRING" id="7227.FBpp0305737"/>
<dbReference type="PaxDb" id="7227-FBpp0305737"/>
<dbReference type="DNASU" id="39777"/>
<dbReference type="EnsemblMetazoa" id="FBtr0301481">
    <property type="protein sequence ID" value="FBpp0290696"/>
    <property type="gene ID" value="FBgn0036581"/>
</dbReference>
<dbReference type="EnsemblMetazoa" id="FBtr0333560">
    <property type="protein sequence ID" value="FBpp0305737"/>
    <property type="gene ID" value="FBgn0036581"/>
</dbReference>
<dbReference type="GeneID" id="39777"/>
<dbReference type="KEGG" id="dme:Dmel_CG5057"/>
<dbReference type="AGR" id="FB:FBgn0036581"/>
<dbReference type="CTD" id="84246"/>
<dbReference type="FlyBase" id="FBgn0036581">
    <property type="gene designation" value="MED10"/>
</dbReference>
<dbReference type="VEuPathDB" id="VectorBase:FBgn0036581"/>
<dbReference type="eggNOG" id="KOG3046">
    <property type="taxonomic scope" value="Eukaryota"/>
</dbReference>
<dbReference type="GeneTree" id="ENSGT00960000187808"/>
<dbReference type="HOGENOM" id="CLU_096169_3_0_1"/>
<dbReference type="InParanoid" id="Q9GYU7"/>
<dbReference type="OMA" id="QYQRAKM"/>
<dbReference type="OrthoDB" id="337270at2759"/>
<dbReference type="PhylomeDB" id="Q9GYU7"/>
<dbReference type="Reactome" id="R-DME-9841922">
    <property type="pathway name" value="MLL4 and MLL3 complexes regulate expression of PPARG target genes in adipogenesis and hepatic steatosis"/>
</dbReference>
<dbReference type="SignaLink" id="Q9GYU7"/>
<dbReference type="BioGRID-ORCS" id="39777">
    <property type="hits" value="1 hit in 1 CRISPR screen"/>
</dbReference>
<dbReference type="GenomeRNAi" id="39777"/>
<dbReference type="PRO" id="PR:Q9GYU7"/>
<dbReference type="Proteomes" id="UP000000803">
    <property type="component" value="Chromosome 3L"/>
</dbReference>
<dbReference type="Bgee" id="FBgn0036581">
    <property type="expression patterns" value="Expressed in adult middle midgut class I enteroendocrine cell in adult midgut (Drosophila) and 152 other cell types or tissues"/>
</dbReference>
<dbReference type="ExpressionAtlas" id="Q9GYU7">
    <property type="expression patterns" value="baseline and differential"/>
</dbReference>
<dbReference type="GO" id="GO:0016592">
    <property type="term" value="C:mediator complex"/>
    <property type="evidence" value="ECO:0000314"/>
    <property type="project" value="UniProtKB"/>
</dbReference>
<dbReference type="GO" id="GO:0003712">
    <property type="term" value="F:transcription coregulator activity"/>
    <property type="evidence" value="ECO:0000315"/>
    <property type="project" value="UniProtKB"/>
</dbReference>
<dbReference type="GO" id="GO:0006357">
    <property type="term" value="P:regulation of transcription by RNA polymerase II"/>
    <property type="evidence" value="ECO:0000315"/>
    <property type="project" value="UniProtKB"/>
</dbReference>
<dbReference type="InterPro" id="IPR019145">
    <property type="entry name" value="Mediator_Med10"/>
</dbReference>
<dbReference type="PANTHER" id="PTHR13345">
    <property type="entry name" value="MEDIATOR OF RNA POLYMERASE II TRANSCRIPTION SUBUNIT 10"/>
    <property type="match status" value="1"/>
</dbReference>
<dbReference type="PANTHER" id="PTHR13345:SF13">
    <property type="entry name" value="MEDIATOR OF RNA POLYMERASE II TRANSCRIPTION SUBUNIT 10"/>
    <property type="match status" value="1"/>
</dbReference>
<dbReference type="Pfam" id="PF09748">
    <property type="entry name" value="Med10"/>
    <property type="match status" value="1"/>
</dbReference>
<proteinExistence type="evidence at protein level"/>
<protein>
    <recommendedName>
        <fullName>Mediator of RNA polymerase II transcription subunit 10</fullName>
    </recommendedName>
    <alternativeName>
        <fullName>Mediator complex subunit 10</fullName>
    </alternativeName>
    <alternativeName>
        <fullName>dMED10</fullName>
    </alternativeName>
    <alternativeName>
        <fullName>dTRAP15</fullName>
    </alternativeName>
</protein>
<evidence type="ECO:0000250" key="1"/>
<evidence type="ECO:0000269" key="2">
    <source>
    </source>
</evidence>
<evidence type="ECO:0000269" key="3">
    <source>
    </source>
</evidence>
<evidence type="ECO:0000305" key="4"/>
<sequence length="133" mass="15657">MSAPLENLETQLEMFIENVRQIRIIVSDFQPQGQNVLNQKINSLVTGLQEIDKLRSQVQDVYVPFEVFFDYIDQDKNPQLYTKDCVEKALAKNEEVKGKIEGLKKFKTNLLLELYKTFPNEMNNYRAYRKDSM</sequence>
<accession>Q9GYU7</accession>
<accession>Q9VUZ9</accession>
<feature type="chain" id="PRO_0000303160" description="Mediator of RNA polymerase II transcription subunit 10">
    <location>
        <begin position="1"/>
        <end position="133"/>
    </location>
</feature>